<sequence>MPEKLQVAIVGSGNISTDLLYKLQRSEYLEPRWMIGIDPESEGLARARKLGLETSHEGVDWLLAQDDKPDLVFEATSAYVHRAAAPRYEEAGIRAIDLTPAAVGPAVIPPANLREHLDAPNVNMITCGGQATIPIVYAVTRAVTEQGGTVPYAEIVASVSSSSAGPGTRANIDEFTKTTSKGVQTIGGAARGKAIIILNPADPPMIMRDTIFCAIPEDVDRDAIAQSIRDVVAEVQTYVPGYRLLNDPQFDDPSINSGGQAVVTTFVEVEGAGDYLPPYAGNLDIMTAAAAKVGEEIAKESLSLAGGAQA</sequence>
<feature type="chain" id="PRO_0000387686" description="Acetaldehyde dehydrogenase 1">
    <location>
        <begin position="1"/>
        <end position="310"/>
    </location>
</feature>
<feature type="active site" description="Acyl-thioester intermediate" evidence="1">
    <location>
        <position position="127"/>
    </location>
</feature>
<feature type="binding site" evidence="1">
    <location>
        <begin position="12"/>
        <end position="15"/>
    </location>
    <ligand>
        <name>NAD(+)</name>
        <dbReference type="ChEBI" id="CHEBI:57540"/>
    </ligand>
</feature>
<feature type="binding site" evidence="1">
    <location>
        <begin position="163"/>
        <end position="171"/>
    </location>
    <ligand>
        <name>NAD(+)</name>
        <dbReference type="ChEBI" id="CHEBI:57540"/>
    </ligand>
</feature>
<feature type="binding site" evidence="1">
    <location>
        <position position="282"/>
    </location>
    <ligand>
        <name>NAD(+)</name>
        <dbReference type="ChEBI" id="CHEBI:57540"/>
    </ligand>
</feature>
<organism>
    <name type="scientific">Mycobacterium sp. (strain MCS)</name>
    <dbReference type="NCBI Taxonomy" id="164756"/>
    <lineage>
        <taxon>Bacteria</taxon>
        <taxon>Bacillati</taxon>
        <taxon>Actinomycetota</taxon>
        <taxon>Actinomycetes</taxon>
        <taxon>Mycobacteriales</taxon>
        <taxon>Mycobacteriaceae</taxon>
        <taxon>Mycobacterium</taxon>
    </lineage>
</organism>
<proteinExistence type="inferred from homology"/>
<comment type="catalytic activity">
    <reaction evidence="1">
        <text>acetaldehyde + NAD(+) + CoA = acetyl-CoA + NADH + H(+)</text>
        <dbReference type="Rhea" id="RHEA:23288"/>
        <dbReference type="ChEBI" id="CHEBI:15343"/>
        <dbReference type="ChEBI" id="CHEBI:15378"/>
        <dbReference type="ChEBI" id="CHEBI:57287"/>
        <dbReference type="ChEBI" id="CHEBI:57288"/>
        <dbReference type="ChEBI" id="CHEBI:57540"/>
        <dbReference type="ChEBI" id="CHEBI:57945"/>
        <dbReference type="EC" id="1.2.1.10"/>
    </reaction>
</comment>
<comment type="similarity">
    <text evidence="1">Belongs to the acetaldehyde dehydrogenase family.</text>
</comment>
<dbReference type="EC" id="1.2.1.10" evidence="1"/>
<dbReference type="EMBL" id="CP000384">
    <property type="protein sequence ID" value="ABG10764.1"/>
    <property type="molecule type" value="Genomic_DNA"/>
</dbReference>
<dbReference type="SMR" id="Q1B2X0"/>
<dbReference type="KEGG" id="mmc:Mmcs_4660"/>
<dbReference type="HOGENOM" id="CLU_062208_0_0_11"/>
<dbReference type="BioCyc" id="MSP164756:G1G6O-4763-MONOMER"/>
<dbReference type="GO" id="GO:0008774">
    <property type="term" value="F:acetaldehyde dehydrogenase (acetylating) activity"/>
    <property type="evidence" value="ECO:0007669"/>
    <property type="project" value="UniProtKB-UniRule"/>
</dbReference>
<dbReference type="GO" id="GO:0051287">
    <property type="term" value="F:NAD binding"/>
    <property type="evidence" value="ECO:0007669"/>
    <property type="project" value="UniProtKB-UniRule"/>
</dbReference>
<dbReference type="GO" id="GO:0009056">
    <property type="term" value="P:catabolic process"/>
    <property type="evidence" value="ECO:0007669"/>
    <property type="project" value="UniProtKB-KW"/>
</dbReference>
<dbReference type="CDD" id="cd23933">
    <property type="entry name" value="ALDH_C"/>
    <property type="match status" value="1"/>
</dbReference>
<dbReference type="Gene3D" id="3.30.360.10">
    <property type="entry name" value="Dihydrodipicolinate Reductase, domain 2"/>
    <property type="match status" value="1"/>
</dbReference>
<dbReference type="Gene3D" id="3.40.50.720">
    <property type="entry name" value="NAD(P)-binding Rossmann-like Domain"/>
    <property type="match status" value="1"/>
</dbReference>
<dbReference type="HAMAP" id="MF_01657">
    <property type="entry name" value="Ac_ald_DH_ac"/>
    <property type="match status" value="1"/>
</dbReference>
<dbReference type="InterPro" id="IPR003361">
    <property type="entry name" value="Acetaldehyde_dehydrogenase"/>
</dbReference>
<dbReference type="InterPro" id="IPR015426">
    <property type="entry name" value="Acetylaldehyde_DH_C"/>
</dbReference>
<dbReference type="InterPro" id="IPR036291">
    <property type="entry name" value="NAD(P)-bd_dom_sf"/>
</dbReference>
<dbReference type="InterPro" id="IPR000534">
    <property type="entry name" value="Semialdehyde_DH_NAD-bd"/>
</dbReference>
<dbReference type="NCBIfam" id="TIGR03215">
    <property type="entry name" value="ac_ald_DH_ac"/>
    <property type="match status" value="1"/>
</dbReference>
<dbReference type="NCBIfam" id="NF006157">
    <property type="entry name" value="PRK08300.1"/>
    <property type="match status" value="1"/>
</dbReference>
<dbReference type="Pfam" id="PF09290">
    <property type="entry name" value="AcetDehyd-dimer"/>
    <property type="match status" value="1"/>
</dbReference>
<dbReference type="PIRSF" id="PIRSF015689">
    <property type="entry name" value="Actaldh_dh_actl"/>
    <property type="match status" value="1"/>
</dbReference>
<dbReference type="SMART" id="SM00859">
    <property type="entry name" value="Semialdhyde_dh"/>
    <property type="match status" value="1"/>
</dbReference>
<dbReference type="SUPFAM" id="SSF55347">
    <property type="entry name" value="Glyceraldehyde-3-phosphate dehydrogenase-like, C-terminal domain"/>
    <property type="match status" value="1"/>
</dbReference>
<dbReference type="SUPFAM" id="SSF51735">
    <property type="entry name" value="NAD(P)-binding Rossmann-fold domains"/>
    <property type="match status" value="1"/>
</dbReference>
<evidence type="ECO:0000255" key="1">
    <source>
        <dbReference type="HAMAP-Rule" id="MF_01657"/>
    </source>
</evidence>
<protein>
    <recommendedName>
        <fullName evidence="1">Acetaldehyde dehydrogenase 1</fullName>
        <ecNumber evidence="1">1.2.1.10</ecNumber>
    </recommendedName>
    <alternativeName>
        <fullName evidence="1">Acetaldehyde dehydrogenase [acetylating] 1</fullName>
    </alternativeName>
</protein>
<reference key="1">
    <citation type="submission" date="2006-06" db="EMBL/GenBank/DDBJ databases">
        <title>Complete sequence of chromosome of Mycobacterium sp. MCS.</title>
        <authorList>
            <consortium name="US DOE Joint Genome Institute"/>
            <person name="Copeland A."/>
            <person name="Lucas S."/>
            <person name="Lapidus A."/>
            <person name="Barry K."/>
            <person name="Detter J.C."/>
            <person name="Glavina del Rio T."/>
            <person name="Hammon N."/>
            <person name="Israni S."/>
            <person name="Dalin E."/>
            <person name="Tice H."/>
            <person name="Pitluck S."/>
            <person name="Martinez M."/>
            <person name="Schmutz J."/>
            <person name="Larimer F."/>
            <person name="Land M."/>
            <person name="Hauser L."/>
            <person name="Kyrpides N."/>
            <person name="Kim E."/>
            <person name="Miller C.D."/>
            <person name="Hughes J.E."/>
            <person name="Anderson A.J."/>
            <person name="Sims R.C."/>
            <person name="Richardson P."/>
        </authorList>
    </citation>
    <scope>NUCLEOTIDE SEQUENCE [LARGE SCALE GENOMIC DNA]</scope>
    <source>
        <strain>MCS</strain>
    </source>
</reference>
<gene>
    <name type="ordered locus">Mmcs_4660</name>
</gene>
<accession>Q1B2X0</accession>
<keyword id="KW-0058">Aromatic hydrocarbons catabolism</keyword>
<keyword id="KW-0520">NAD</keyword>
<keyword id="KW-0560">Oxidoreductase</keyword>
<name>ACDH1_MYCSS</name>